<name>PURT_SHESW</name>
<evidence type="ECO:0000255" key="1">
    <source>
        <dbReference type="HAMAP-Rule" id="MF_01643"/>
    </source>
</evidence>
<accession>A1RMT4</accession>
<comment type="function">
    <text evidence="1">Involved in the de novo purine biosynthesis. Catalyzes the transfer of formate to 5-phospho-ribosyl-glycinamide (GAR), producing 5-phospho-ribosyl-N-formylglycinamide (FGAR). Formate is provided by PurU via hydrolysis of 10-formyl-tetrahydrofolate.</text>
</comment>
<comment type="catalytic activity">
    <reaction evidence="1">
        <text>N(1)-(5-phospho-beta-D-ribosyl)glycinamide + formate + ATP = N(2)-formyl-N(1)-(5-phospho-beta-D-ribosyl)glycinamide + ADP + phosphate + H(+)</text>
        <dbReference type="Rhea" id="RHEA:24829"/>
        <dbReference type="ChEBI" id="CHEBI:15378"/>
        <dbReference type="ChEBI" id="CHEBI:15740"/>
        <dbReference type="ChEBI" id="CHEBI:30616"/>
        <dbReference type="ChEBI" id="CHEBI:43474"/>
        <dbReference type="ChEBI" id="CHEBI:143788"/>
        <dbReference type="ChEBI" id="CHEBI:147286"/>
        <dbReference type="ChEBI" id="CHEBI:456216"/>
        <dbReference type="EC" id="6.3.1.21"/>
    </reaction>
    <physiologicalReaction direction="left-to-right" evidence="1">
        <dbReference type="Rhea" id="RHEA:24830"/>
    </physiologicalReaction>
</comment>
<comment type="pathway">
    <text evidence="1">Purine metabolism; IMP biosynthesis via de novo pathway; N(2)-formyl-N(1)-(5-phospho-D-ribosyl)glycinamide from N(1)-(5-phospho-D-ribosyl)glycinamide (formate route): step 1/1.</text>
</comment>
<comment type="subunit">
    <text evidence="1">Homodimer.</text>
</comment>
<comment type="similarity">
    <text evidence="1">Belongs to the PurK/PurT family.</text>
</comment>
<sequence length="391" mass="42235">MIGTPYTEGARRAMLLGCGELGKEVAIELQRLGVEVIGVDRYANAPAMQVAHRSHVINMLDAKALRAIIELEKPHLVIPEIEAIATQTLVEMEAEGVNIIPTARATKLTMDREGIRRLAAETLGLPTSPYFFCDTETEFNQAIREIGVPCVVKPVMSSSGKGQSVIRDIAQSNKAWQYAQEGGRAGGGRVIVEGFVPFDYEITLLTVSAVNGIHFCAPIGHRQEDGDYRESWQPQAMSDEVLAKSQAIASKVVEALGGYGLFGVELFVKGNEVYFSEVSPRPHDTGLVTLISQDLSEFALHVRAILGLPIPNIHQHGPSASAVILAEGTSSNIRYQGIGAALEAVNTQLRLFAKPDIDGRRRLGVALARDIDIDSAISKALDSASKVKVIF</sequence>
<feature type="chain" id="PRO_0000319237" description="Formate-dependent phosphoribosylglycinamide formyltransferase">
    <location>
        <begin position="1"/>
        <end position="391"/>
    </location>
</feature>
<feature type="domain" description="ATP-grasp" evidence="1">
    <location>
        <begin position="117"/>
        <end position="306"/>
    </location>
</feature>
<feature type="binding site" evidence="1">
    <location>
        <begin position="20"/>
        <end position="21"/>
    </location>
    <ligand>
        <name>N(1)-(5-phospho-beta-D-ribosyl)glycinamide</name>
        <dbReference type="ChEBI" id="CHEBI:143788"/>
    </ligand>
</feature>
<feature type="binding site" evidence="1">
    <location>
        <position position="80"/>
    </location>
    <ligand>
        <name>N(1)-(5-phospho-beta-D-ribosyl)glycinamide</name>
        <dbReference type="ChEBI" id="CHEBI:143788"/>
    </ligand>
</feature>
<feature type="binding site" evidence="1">
    <location>
        <position position="112"/>
    </location>
    <ligand>
        <name>ATP</name>
        <dbReference type="ChEBI" id="CHEBI:30616"/>
    </ligand>
</feature>
<feature type="binding site" evidence="1">
    <location>
        <position position="153"/>
    </location>
    <ligand>
        <name>ATP</name>
        <dbReference type="ChEBI" id="CHEBI:30616"/>
    </ligand>
</feature>
<feature type="binding site" evidence="1">
    <location>
        <begin position="158"/>
        <end position="163"/>
    </location>
    <ligand>
        <name>ATP</name>
        <dbReference type="ChEBI" id="CHEBI:30616"/>
    </ligand>
</feature>
<feature type="binding site" evidence="1">
    <location>
        <begin position="193"/>
        <end position="196"/>
    </location>
    <ligand>
        <name>ATP</name>
        <dbReference type="ChEBI" id="CHEBI:30616"/>
    </ligand>
</feature>
<feature type="binding site" evidence="1">
    <location>
        <position position="201"/>
    </location>
    <ligand>
        <name>ATP</name>
        <dbReference type="ChEBI" id="CHEBI:30616"/>
    </ligand>
</feature>
<feature type="binding site" evidence="1">
    <location>
        <position position="265"/>
    </location>
    <ligand>
        <name>Mg(2+)</name>
        <dbReference type="ChEBI" id="CHEBI:18420"/>
    </ligand>
</feature>
<feature type="binding site" evidence="1">
    <location>
        <position position="277"/>
    </location>
    <ligand>
        <name>Mg(2+)</name>
        <dbReference type="ChEBI" id="CHEBI:18420"/>
    </ligand>
</feature>
<feature type="binding site" evidence="1">
    <location>
        <position position="284"/>
    </location>
    <ligand>
        <name>N(1)-(5-phospho-beta-D-ribosyl)glycinamide</name>
        <dbReference type="ChEBI" id="CHEBI:143788"/>
    </ligand>
</feature>
<feature type="binding site" evidence="1">
    <location>
        <position position="354"/>
    </location>
    <ligand>
        <name>N(1)-(5-phospho-beta-D-ribosyl)glycinamide</name>
        <dbReference type="ChEBI" id="CHEBI:143788"/>
    </ligand>
</feature>
<feature type="binding site" evidence="1">
    <location>
        <begin position="361"/>
        <end position="362"/>
    </location>
    <ligand>
        <name>N(1)-(5-phospho-beta-D-ribosyl)glycinamide</name>
        <dbReference type="ChEBI" id="CHEBI:143788"/>
    </ligand>
</feature>
<gene>
    <name evidence="1" type="primary">purT</name>
    <name type="ordered locus">Sputw3181_3164</name>
</gene>
<proteinExistence type="inferred from homology"/>
<protein>
    <recommendedName>
        <fullName evidence="1">Formate-dependent phosphoribosylglycinamide formyltransferase</fullName>
        <ecNumber evidence="1">6.3.1.21</ecNumber>
    </recommendedName>
    <alternativeName>
        <fullName evidence="1">5'-phosphoribosylglycinamide transformylase 2</fullName>
    </alternativeName>
    <alternativeName>
        <fullName evidence="1">Formate-dependent GAR transformylase</fullName>
    </alternativeName>
    <alternativeName>
        <fullName evidence="1">GAR transformylase 2</fullName>
        <shortName evidence="1">GART 2</shortName>
    </alternativeName>
    <alternativeName>
        <fullName evidence="1">Non-folate glycinamide ribonucleotide transformylase</fullName>
    </alternativeName>
    <alternativeName>
        <fullName evidence="1">Phosphoribosylglycinamide formyltransferase 2</fullName>
    </alternativeName>
</protein>
<reference key="1">
    <citation type="submission" date="2006-12" db="EMBL/GenBank/DDBJ databases">
        <title>Complete sequence of Shewanella sp. W3-18-1.</title>
        <authorList>
            <consortium name="US DOE Joint Genome Institute"/>
            <person name="Copeland A."/>
            <person name="Lucas S."/>
            <person name="Lapidus A."/>
            <person name="Barry K."/>
            <person name="Detter J.C."/>
            <person name="Glavina del Rio T."/>
            <person name="Hammon N."/>
            <person name="Israni S."/>
            <person name="Dalin E."/>
            <person name="Tice H."/>
            <person name="Pitluck S."/>
            <person name="Chain P."/>
            <person name="Malfatti S."/>
            <person name="Shin M."/>
            <person name="Vergez L."/>
            <person name="Schmutz J."/>
            <person name="Larimer F."/>
            <person name="Land M."/>
            <person name="Hauser L."/>
            <person name="Kyrpides N."/>
            <person name="Lykidis A."/>
            <person name="Tiedje J."/>
            <person name="Richardson P."/>
        </authorList>
    </citation>
    <scope>NUCLEOTIDE SEQUENCE [LARGE SCALE GENOMIC DNA]</scope>
    <source>
        <strain>W3-18-1</strain>
    </source>
</reference>
<dbReference type="EC" id="6.3.1.21" evidence="1"/>
<dbReference type="EMBL" id="CP000503">
    <property type="protein sequence ID" value="ABM25979.1"/>
    <property type="molecule type" value="Genomic_DNA"/>
</dbReference>
<dbReference type="RefSeq" id="WP_011790429.1">
    <property type="nucleotide sequence ID" value="NC_008750.1"/>
</dbReference>
<dbReference type="SMR" id="A1RMT4"/>
<dbReference type="KEGG" id="shw:Sputw3181_3164"/>
<dbReference type="HOGENOM" id="CLU_011534_1_3_6"/>
<dbReference type="UniPathway" id="UPA00074">
    <property type="reaction ID" value="UER00127"/>
</dbReference>
<dbReference type="Proteomes" id="UP000002597">
    <property type="component" value="Chromosome"/>
</dbReference>
<dbReference type="GO" id="GO:0005829">
    <property type="term" value="C:cytosol"/>
    <property type="evidence" value="ECO:0007669"/>
    <property type="project" value="TreeGrafter"/>
</dbReference>
<dbReference type="GO" id="GO:0005524">
    <property type="term" value="F:ATP binding"/>
    <property type="evidence" value="ECO:0007669"/>
    <property type="project" value="UniProtKB-UniRule"/>
</dbReference>
<dbReference type="GO" id="GO:0000287">
    <property type="term" value="F:magnesium ion binding"/>
    <property type="evidence" value="ECO:0007669"/>
    <property type="project" value="InterPro"/>
</dbReference>
<dbReference type="GO" id="GO:0043815">
    <property type="term" value="F:phosphoribosylglycinamide formyltransferase 2 activity"/>
    <property type="evidence" value="ECO:0007669"/>
    <property type="project" value="UniProtKB-UniRule"/>
</dbReference>
<dbReference type="GO" id="GO:0004644">
    <property type="term" value="F:phosphoribosylglycinamide formyltransferase activity"/>
    <property type="evidence" value="ECO:0007669"/>
    <property type="project" value="InterPro"/>
</dbReference>
<dbReference type="GO" id="GO:0006189">
    <property type="term" value="P:'de novo' IMP biosynthetic process"/>
    <property type="evidence" value="ECO:0007669"/>
    <property type="project" value="UniProtKB-UniRule"/>
</dbReference>
<dbReference type="FunFam" id="3.30.1490.20:FF:000013">
    <property type="entry name" value="Formate-dependent phosphoribosylglycinamide formyltransferase"/>
    <property type="match status" value="1"/>
</dbReference>
<dbReference type="FunFam" id="3.30.470.20:FF:000027">
    <property type="entry name" value="Formate-dependent phosphoribosylglycinamide formyltransferase"/>
    <property type="match status" value="1"/>
</dbReference>
<dbReference type="FunFam" id="3.40.50.20:FF:000007">
    <property type="entry name" value="Formate-dependent phosphoribosylglycinamide formyltransferase"/>
    <property type="match status" value="1"/>
</dbReference>
<dbReference type="Gene3D" id="3.40.50.20">
    <property type="match status" value="1"/>
</dbReference>
<dbReference type="Gene3D" id="3.30.1490.20">
    <property type="entry name" value="ATP-grasp fold, A domain"/>
    <property type="match status" value="1"/>
</dbReference>
<dbReference type="Gene3D" id="3.30.470.20">
    <property type="entry name" value="ATP-grasp fold, B domain"/>
    <property type="match status" value="1"/>
</dbReference>
<dbReference type="HAMAP" id="MF_01643">
    <property type="entry name" value="PurT"/>
    <property type="match status" value="1"/>
</dbReference>
<dbReference type="InterPro" id="IPR011761">
    <property type="entry name" value="ATP-grasp"/>
</dbReference>
<dbReference type="InterPro" id="IPR003135">
    <property type="entry name" value="ATP-grasp_carboxylate-amine"/>
</dbReference>
<dbReference type="InterPro" id="IPR013815">
    <property type="entry name" value="ATP_grasp_subdomain_1"/>
</dbReference>
<dbReference type="InterPro" id="IPR016185">
    <property type="entry name" value="PreATP-grasp_dom_sf"/>
</dbReference>
<dbReference type="InterPro" id="IPR005862">
    <property type="entry name" value="PurT"/>
</dbReference>
<dbReference type="InterPro" id="IPR054350">
    <property type="entry name" value="PurT/PurK_preATP-grasp"/>
</dbReference>
<dbReference type="InterPro" id="IPR048740">
    <property type="entry name" value="PurT_C"/>
</dbReference>
<dbReference type="InterPro" id="IPR011054">
    <property type="entry name" value="Rudment_hybrid_motif"/>
</dbReference>
<dbReference type="NCBIfam" id="NF006766">
    <property type="entry name" value="PRK09288.1"/>
    <property type="match status" value="1"/>
</dbReference>
<dbReference type="NCBIfam" id="TIGR01142">
    <property type="entry name" value="purT"/>
    <property type="match status" value="1"/>
</dbReference>
<dbReference type="PANTHER" id="PTHR43055">
    <property type="entry name" value="FORMATE-DEPENDENT PHOSPHORIBOSYLGLYCINAMIDE FORMYLTRANSFERASE"/>
    <property type="match status" value="1"/>
</dbReference>
<dbReference type="PANTHER" id="PTHR43055:SF1">
    <property type="entry name" value="FORMATE-DEPENDENT PHOSPHORIBOSYLGLYCINAMIDE FORMYLTRANSFERASE"/>
    <property type="match status" value="1"/>
</dbReference>
<dbReference type="Pfam" id="PF02222">
    <property type="entry name" value="ATP-grasp"/>
    <property type="match status" value="1"/>
</dbReference>
<dbReference type="Pfam" id="PF21244">
    <property type="entry name" value="PurT_C"/>
    <property type="match status" value="1"/>
</dbReference>
<dbReference type="Pfam" id="PF22660">
    <property type="entry name" value="RS_preATP-grasp-like"/>
    <property type="match status" value="1"/>
</dbReference>
<dbReference type="SUPFAM" id="SSF56059">
    <property type="entry name" value="Glutathione synthetase ATP-binding domain-like"/>
    <property type="match status" value="1"/>
</dbReference>
<dbReference type="SUPFAM" id="SSF52440">
    <property type="entry name" value="PreATP-grasp domain"/>
    <property type="match status" value="1"/>
</dbReference>
<dbReference type="SUPFAM" id="SSF51246">
    <property type="entry name" value="Rudiment single hybrid motif"/>
    <property type="match status" value="1"/>
</dbReference>
<dbReference type="PROSITE" id="PS50975">
    <property type="entry name" value="ATP_GRASP"/>
    <property type="match status" value="1"/>
</dbReference>
<keyword id="KW-0067">ATP-binding</keyword>
<keyword id="KW-0436">Ligase</keyword>
<keyword id="KW-0460">Magnesium</keyword>
<keyword id="KW-0479">Metal-binding</keyword>
<keyword id="KW-0547">Nucleotide-binding</keyword>
<keyword id="KW-0658">Purine biosynthesis</keyword>
<organism>
    <name type="scientific">Shewanella sp. (strain W3-18-1)</name>
    <dbReference type="NCBI Taxonomy" id="351745"/>
    <lineage>
        <taxon>Bacteria</taxon>
        <taxon>Pseudomonadati</taxon>
        <taxon>Pseudomonadota</taxon>
        <taxon>Gammaproteobacteria</taxon>
        <taxon>Alteromonadales</taxon>
        <taxon>Shewanellaceae</taxon>
        <taxon>Shewanella</taxon>
    </lineage>
</organism>